<dbReference type="EMBL" id="AK002587">
    <property type="protein sequence ID" value="BAB22209.1"/>
    <property type="molecule type" value="mRNA"/>
</dbReference>
<dbReference type="EMBL" id="BC019451">
    <property type="protein sequence ID" value="AAH19451.1"/>
    <property type="molecule type" value="mRNA"/>
</dbReference>
<dbReference type="CCDS" id="CCDS21207.1"/>
<dbReference type="RefSeq" id="NP_080966.1">
    <property type="nucleotide sequence ID" value="NM_026690.1"/>
</dbReference>
<dbReference type="SMR" id="Q9DCQ2"/>
<dbReference type="FunCoup" id="Q9DCQ2">
    <property type="interactions" value="177"/>
</dbReference>
<dbReference type="STRING" id="10090.ENSMUSP00000039202"/>
<dbReference type="GlyGen" id="Q9DCQ2">
    <property type="glycosylation" value="1 site, 1 O-linked glycan (1 site)"/>
</dbReference>
<dbReference type="iPTMnet" id="Q9DCQ2"/>
<dbReference type="PhosphoSitePlus" id="Q9DCQ2"/>
<dbReference type="jPOST" id="Q9DCQ2"/>
<dbReference type="PaxDb" id="10090-ENSMUSP00000039202"/>
<dbReference type="PeptideAtlas" id="Q9DCQ2"/>
<dbReference type="ProteomicsDB" id="277046"/>
<dbReference type="Antibodypedia" id="46022">
    <property type="antibodies" value="76 antibodies from 11 providers"/>
</dbReference>
<dbReference type="Ensembl" id="ENSMUST00000035929.11">
    <property type="protein sequence ID" value="ENSMUSP00000039202.5"/>
    <property type="gene ID" value="ENSMUSG00000038704.13"/>
</dbReference>
<dbReference type="GeneID" id="68352"/>
<dbReference type="KEGG" id="mmu:68352"/>
<dbReference type="UCSC" id="uc009gpk.1">
    <property type="organism name" value="mouse"/>
</dbReference>
<dbReference type="AGR" id="MGI:1915602"/>
<dbReference type="CTD" id="554235"/>
<dbReference type="MGI" id="MGI:1915602">
    <property type="gene designation" value="Aspdh"/>
</dbReference>
<dbReference type="VEuPathDB" id="HostDB:ENSMUSG00000038704"/>
<dbReference type="eggNOG" id="ENOG502QVGC">
    <property type="taxonomic scope" value="Eukaryota"/>
</dbReference>
<dbReference type="GeneTree" id="ENSGT00390000004452"/>
<dbReference type="InParanoid" id="Q9DCQ2"/>
<dbReference type="OMA" id="KHPTSFK"/>
<dbReference type="OrthoDB" id="4310724at2759"/>
<dbReference type="PhylomeDB" id="Q9DCQ2"/>
<dbReference type="TreeFam" id="TF315092"/>
<dbReference type="BioGRID-ORCS" id="68352">
    <property type="hits" value="5 hits in 76 CRISPR screens"/>
</dbReference>
<dbReference type="PRO" id="PR:Q9DCQ2"/>
<dbReference type="Proteomes" id="UP000000589">
    <property type="component" value="Chromosome 7"/>
</dbReference>
<dbReference type="RNAct" id="Q9DCQ2">
    <property type="molecule type" value="protein"/>
</dbReference>
<dbReference type="Bgee" id="ENSMUSG00000038704">
    <property type="expression patterns" value="Expressed in right kidney and 35 other cell types or tissues"/>
</dbReference>
<dbReference type="ExpressionAtlas" id="Q9DCQ2">
    <property type="expression patterns" value="baseline and differential"/>
</dbReference>
<dbReference type="GO" id="GO:0033735">
    <property type="term" value="F:aspartate dehydrogenase activity"/>
    <property type="evidence" value="ECO:0007669"/>
    <property type="project" value="UniProtKB-EC"/>
</dbReference>
<dbReference type="GO" id="GO:0050661">
    <property type="term" value="F:NADP binding"/>
    <property type="evidence" value="ECO:0007669"/>
    <property type="project" value="InterPro"/>
</dbReference>
<dbReference type="GO" id="GO:0009435">
    <property type="term" value="P:NAD biosynthetic process"/>
    <property type="evidence" value="ECO:0007669"/>
    <property type="project" value="InterPro"/>
</dbReference>
<dbReference type="Gene3D" id="3.30.360.10">
    <property type="entry name" value="Dihydrodipicolinate Reductase, domain 2"/>
    <property type="match status" value="1"/>
</dbReference>
<dbReference type="Gene3D" id="3.40.50.720">
    <property type="entry name" value="NAD(P)-binding Rossmann-like Domain"/>
    <property type="match status" value="1"/>
</dbReference>
<dbReference type="InterPro" id="IPR005106">
    <property type="entry name" value="Asp/hSer_DH_NAD-bd"/>
</dbReference>
<dbReference type="InterPro" id="IPR002811">
    <property type="entry name" value="Asp_DH"/>
</dbReference>
<dbReference type="InterPro" id="IPR011182">
    <property type="entry name" value="L-Asp_DH"/>
</dbReference>
<dbReference type="InterPro" id="IPR036291">
    <property type="entry name" value="NAD(P)-bd_dom_sf"/>
</dbReference>
<dbReference type="PANTHER" id="PTHR31873:SF6">
    <property type="entry name" value="ASPARTATE DEHYDROGENASE DOMAIN-CONTAINING PROTEIN"/>
    <property type="match status" value="1"/>
</dbReference>
<dbReference type="PANTHER" id="PTHR31873">
    <property type="entry name" value="L-ASPARTATE DEHYDROGENASE-RELATED"/>
    <property type="match status" value="1"/>
</dbReference>
<dbReference type="Pfam" id="PF01958">
    <property type="entry name" value="Asp_DH_C"/>
    <property type="match status" value="1"/>
</dbReference>
<dbReference type="Pfam" id="PF03447">
    <property type="entry name" value="NAD_binding_3"/>
    <property type="match status" value="1"/>
</dbReference>
<dbReference type="PIRSF" id="PIRSF005227">
    <property type="entry name" value="Asp_dh_NAD_syn"/>
    <property type="match status" value="1"/>
</dbReference>
<dbReference type="SUPFAM" id="SSF55347">
    <property type="entry name" value="Glyceraldehyde-3-phosphate dehydrogenase-like, C-terminal domain"/>
    <property type="match status" value="1"/>
</dbReference>
<dbReference type="SUPFAM" id="SSF51735">
    <property type="entry name" value="NAD(P)-binding Rossmann-fold domains"/>
    <property type="match status" value="1"/>
</dbReference>
<gene>
    <name evidence="3" type="primary">Aspdh</name>
</gene>
<feature type="chain" id="PRO_0000144901" description="Aspartate dehydrogenase domain-containing protein">
    <location>
        <begin position="1"/>
        <end position="287"/>
    </location>
</feature>
<feature type="modified residue" description="Phosphoserine" evidence="1">
    <location>
        <position position="24"/>
    </location>
</feature>
<feature type="modified residue" description="Phosphoserine" evidence="1">
    <location>
        <position position="172"/>
    </location>
</feature>
<feature type="sequence conflict" description="In Ref. 2; AAH19451." evidence="2" ref="2">
    <original>A</original>
    <variation>V</variation>
    <location>
        <position position="117"/>
    </location>
</feature>
<feature type="sequence conflict" description="In Ref. 2; AAH19451." evidence="2" ref="2">
    <original>A</original>
    <variation>S</variation>
    <location>
        <position position="245"/>
    </location>
</feature>
<sequence length="287" mass="30270">MATSTLPQVPYKVGVVGYGRLGQSLVSRLLAQGSELGLELVFVWNRDPGRMAGSVPPALQLQDLTALEERHPDLVVEVAHPKIIHESGAQILRHANLLVGSPSALADQTTEQQLLEASKRWGHTVFVARGALWGSEDISRLDAAGGLQSLRVTMATHPDGFRLEGPLAAAHSSGPRTVLYEGPVRGLCPLAPRNSNTMAAAALAAPSLGFDRVIGVLVADLSLTDMHVVDVELLGPPGPSGRSFAVHTHRENPAQPGAVTGSATVTAFWHSLLGCCQLTSRPGIHLC</sequence>
<accession>Q9DCQ2</accession>
<accession>Q8VCQ0</accession>
<name>ASPDH_MOUSE</name>
<proteinExistence type="evidence at protein level"/>
<organism>
    <name type="scientific">Mus musculus</name>
    <name type="common">Mouse</name>
    <dbReference type="NCBI Taxonomy" id="10090"/>
    <lineage>
        <taxon>Eukaryota</taxon>
        <taxon>Metazoa</taxon>
        <taxon>Chordata</taxon>
        <taxon>Craniata</taxon>
        <taxon>Vertebrata</taxon>
        <taxon>Euteleostomi</taxon>
        <taxon>Mammalia</taxon>
        <taxon>Eutheria</taxon>
        <taxon>Euarchontoglires</taxon>
        <taxon>Glires</taxon>
        <taxon>Rodentia</taxon>
        <taxon>Myomorpha</taxon>
        <taxon>Muroidea</taxon>
        <taxon>Muridae</taxon>
        <taxon>Murinae</taxon>
        <taxon>Mus</taxon>
        <taxon>Mus</taxon>
    </lineage>
</organism>
<evidence type="ECO:0000250" key="1">
    <source>
        <dbReference type="UniProtKB" id="A6ND91"/>
    </source>
</evidence>
<evidence type="ECO:0000305" key="2"/>
<evidence type="ECO:0000312" key="3">
    <source>
        <dbReference type="MGI" id="MGI:1915602"/>
    </source>
</evidence>
<protein>
    <recommendedName>
        <fullName evidence="2">Aspartate dehydrogenase domain-containing protein</fullName>
    </recommendedName>
</protein>
<reference key="1">
    <citation type="journal article" date="2005" name="Science">
        <title>The transcriptional landscape of the mammalian genome.</title>
        <authorList>
            <person name="Carninci P."/>
            <person name="Kasukawa T."/>
            <person name="Katayama S."/>
            <person name="Gough J."/>
            <person name="Frith M.C."/>
            <person name="Maeda N."/>
            <person name="Oyama R."/>
            <person name="Ravasi T."/>
            <person name="Lenhard B."/>
            <person name="Wells C."/>
            <person name="Kodzius R."/>
            <person name="Shimokawa K."/>
            <person name="Bajic V.B."/>
            <person name="Brenner S.E."/>
            <person name="Batalov S."/>
            <person name="Forrest A.R."/>
            <person name="Zavolan M."/>
            <person name="Davis M.J."/>
            <person name="Wilming L.G."/>
            <person name="Aidinis V."/>
            <person name="Allen J.E."/>
            <person name="Ambesi-Impiombato A."/>
            <person name="Apweiler R."/>
            <person name="Aturaliya R.N."/>
            <person name="Bailey T.L."/>
            <person name="Bansal M."/>
            <person name="Baxter L."/>
            <person name="Beisel K.W."/>
            <person name="Bersano T."/>
            <person name="Bono H."/>
            <person name="Chalk A.M."/>
            <person name="Chiu K.P."/>
            <person name="Choudhary V."/>
            <person name="Christoffels A."/>
            <person name="Clutterbuck D.R."/>
            <person name="Crowe M.L."/>
            <person name="Dalla E."/>
            <person name="Dalrymple B.P."/>
            <person name="de Bono B."/>
            <person name="Della Gatta G."/>
            <person name="di Bernardo D."/>
            <person name="Down T."/>
            <person name="Engstrom P."/>
            <person name="Fagiolini M."/>
            <person name="Faulkner G."/>
            <person name="Fletcher C.F."/>
            <person name="Fukushima T."/>
            <person name="Furuno M."/>
            <person name="Futaki S."/>
            <person name="Gariboldi M."/>
            <person name="Georgii-Hemming P."/>
            <person name="Gingeras T.R."/>
            <person name="Gojobori T."/>
            <person name="Green R.E."/>
            <person name="Gustincich S."/>
            <person name="Harbers M."/>
            <person name="Hayashi Y."/>
            <person name="Hensch T.K."/>
            <person name="Hirokawa N."/>
            <person name="Hill D."/>
            <person name="Huminiecki L."/>
            <person name="Iacono M."/>
            <person name="Ikeo K."/>
            <person name="Iwama A."/>
            <person name="Ishikawa T."/>
            <person name="Jakt M."/>
            <person name="Kanapin A."/>
            <person name="Katoh M."/>
            <person name="Kawasawa Y."/>
            <person name="Kelso J."/>
            <person name="Kitamura H."/>
            <person name="Kitano H."/>
            <person name="Kollias G."/>
            <person name="Krishnan S.P."/>
            <person name="Kruger A."/>
            <person name="Kummerfeld S.K."/>
            <person name="Kurochkin I.V."/>
            <person name="Lareau L.F."/>
            <person name="Lazarevic D."/>
            <person name="Lipovich L."/>
            <person name="Liu J."/>
            <person name="Liuni S."/>
            <person name="McWilliam S."/>
            <person name="Madan Babu M."/>
            <person name="Madera M."/>
            <person name="Marchionni L."/>
            <person name="Matsuda H."/>
            <person name="Matsuzawa S."/>
            <person name="Miki H."/>
            <person name="Mignone F."/>
            <person name="Miyake S."/>
            <person name="Morris K."/>
            <person name="Mottagui-Tabar S."/>
            <person name="Mulder N."/>
            <person name="Nakano N."/>
            <person name="Nakauchi H."/>
            <person name="Ng P."/>
            <person name="Nilsson R."/>
            <person name="Nishiguchi S."/>
            <person name="Nishikawa S."/>
            <person name="Nori F."/>
            <person name="Ohara O."/>
            <person name="Okazaki Y."/>
            <person name="Orlando V."/>
            <person name="Pang K.C."/>
            <person name="Pavan W.J."/>
            <person name="Pavesi G."/>
            <person name="Pesole G."/>
            <person name="Petrovsky N."/>
            <person name="Piazza S."/>
            <person name="Reed J."/>
            <person name="Reid J.F."/>
            <person name="Ring B.Z."/>
            <person name="Ringwald M."/>
            <person name="Rost B."/>
            <person name="Ruan Y."/>
            <person name="Salzberg S.L."/>
            <person name="Sandelin A."/>
            <person name="Schneider C."/>
            <person name="Schoenbach C."/>
            <person name="Sekiguchi K."/>
            <person name="Semple C.A."/>
            <person name="Seno S."/>
            <person name="Sessa L."/>
            <person name="Sheng Y."/>
            <person name="Shibata Y."/>
            <person name="Shimada H."/>
            <person name="Shimada K."/>
            <person name="Silva D."/>
            <person name="Sinclair B."/>
            <person name="Sperling S."/>
            <person name="Stupka E."/>
            <person name="Sugiura K."/>
            <person name="Sultana R."/>
            <person name="Takenaka Y."/>
            <person name="Taki K."/>
            <person name="Tammoja K."/>
            <person name="Tan S.L."/>
            <person name="Tang S."/>
            <person name="Taylor M.S."/>
            <person name="Tegner J."/>
            <person name="Teichmann S.A."/>
            <person name="Ueda H.R."/>
            <person name="van Nimwegen E."/>
            <person name="Verardo R."/>
            <person name="Wei C.L."/>
            <person name="Yagi K."/>
            <person name="Yamanishi H."/>
            <person name="Zabarovsky E."/>
            <person name="Zhu S."/>
            <person name="Zimmer A."/>
            <person name="Hide W."/>
            <person name="Bult C."/>
            <person name="Grimmond S.M."/>
            <person name="Teasdale R.D."/>
            <person name="Liu E.T."/>
            <person name="Brusic V."/>
            <person name="Quackenbush J."/>
            <person name="Wahlestedt C."/>
            <person name="Mattick J.S."/>
            <person name="Hume D.A."/>
            <person name="Kai C."/>
            <person name="Sasaki D."/>
            <person name="Tomaru Y."/>
            <person name="Fukuda S."/>
            <person name="Kanamori-Katayama M."/>
            <person name="Suzuki M."/>
            <person name="Aoki J."/>
            <person name="Arakawa T."/>
            <person name="Iida J."/>
            <person name="Imamura K."/>
            <person name="Itoh M."/>
            <person name="Kato T."/>
            <person name="Kawaji H."/>
            <person name="Kawagashira N."/>
            <person name="Kawashima T."/>
            <person name="Kojima M."/>
            <person name="Kondo S."/>
            <person name="Konno H."/>
            <person name="Nakano K."/>
            <person name="Ninomiya N."/>
            <person name="Nishio T."/>
            <person name="Okada M."/>
            <person name="Plessy C."/>
            <person name="Shibata K."/>
            <person name="Shiraki T."/>
            <person name="Suzuki S."/>
            <person name="Tagami M."/>
            <person name="Waki K."/>
            <person name="Watahiki A."/>
            <person name="Okamura-Oho Y."/>
            <person name="Suzuki H."/>
            <person name="Kawai J."/>
            <person name="Hayashizaki Y."/>
        </authorList>
    </citation>
    <scope>NUCLEOTIDE SEQUENCE [LARGE SCALE MRNA]</scope>
    <source>
        <strain>C57BL/6J</strain>
        <tissue>Kidney</tissue>
    </source>
</reference>
<reference key="2">
    <citation type="journal article" date="2004" name="Genome Res.">
        <title>The status, quality, and expansion of the NIH full-length cDNA project: the Mammalian Gene Collection (MGC).</title>
        <authorList>
            <consortium name="The MGC Project Team"/>
        </authorList>
    </citation>
    <scope>NUCLEOTIDE SEQUENCE [LARGE SCALE MRNA]</scope>
    <source>
        <strain>FVB/N</strain>
        <tissue>Liver</tissue>
    </source>
</reference>
<reference key="3">
    <citation type="submission" date="2009-01" db="UniProtKB">
        <authorList>
            <person name="Lubec G."/>
            <person name="Sunyer B."/>
            <person name="Chen W.-Q."/>
        </authorList>
    </citation>
    <scope>PROTEIN SEQUENCE OF 13-20</scope>
    <scope>IDENTIFICATION BY MASS SPECTROMETRY</scope>
    <source>
        <strain>OF1</strain>
        <tissue>Hippocampus</tissue>
    </source>
</reference>
<reference key="4">
    <citation type="journal article" date="2010" name="Cell">
        <title>A tissue-specific atlas of mouse protein phosphorylation and expression.</title>
        <authorList>
            <person name="Huttlin E.L."/>
            <person name="Jedrychowski M.P."/>
            <person name="Elias J.E."/>
            <person name="Goswami T."/>
            <person name="Rad R."/>
            <person name="Beausoleil S.A."/>
            <person name="Villen J."/>
            <person name="Haas W."/>
            <person name="Sowa M.E."/>
            <person name="Gygi S.P."/>
        </authorList>
    </citation>
    <scope>IDENTIFICATION BY MASS SPECTROMETRY [LARGE SCALE ANALYSIS]</scope>
    <source>
        <tissue>Kidney</tissue>
        <tissue>Liver</tissue>
    </source>
</reference>
<comment type="similarity">
    <text evidence="2">Belongs to the L-aspartate dehydrogenase family.</text>
</comment>
<keyword id="KW-0903">Direct protein sequencing</keyword>
<keyword id="KW-0597">Phosphoprotein</keyword>
<keyword id="KW-1185">Reference proteome</keyword>